<accession>Q5QXI6</accession>
<evidence type="ECO:0000255" key="1">
    <source>
        <dbReference type="HAMAP-Rule" id="MF_00182"/>
    </source>
</evidence>
<protein>
    <recommendedName>
        <fullName evidence="1">Methionyl-tRNA formyltransferase</fullName>
        <ecNumber evidence="1">2.1.2.9</ecNumber>
    </recommendedName>
</protein>
<comment type="function">
    <text evidence="1">Attaches a formyl group to the free amino group of methionyl-tRNA(fMet). The formyl group appears to play a dual role in the initiator identity of N-formylmethionyl-tRNA by promoting its recognition by IF2 and preventing the misappropriation of this tRNA by the elongation apparatus.</text>
</comment>
<comment type="catalytic activity">
    <reaction evidence="1">
        <text>L-methionyl-tRNA(fMet) + (6R)-10-formyltetrahydrofolate = N-formyl-L-methionyl-tRNA(fMet) + (6S)-5,6,7,8-tetrahydrofolate + H(+)</text>
        <dbReference type="Rhea" id="RHEA:24380"/>
        <dbReference type="Rhea" id="RHEA-COMP:9952"/>
        <dbReference type="Rhea" id="RHEA-COMP:9953"/>
        <dbReference type="ChEBI" id="CHEBI:15378"/>
        <dbReference type="ChEBI" id="CHEBI:57453"/>
        <dbReference type="ChEBI" id="CHEBI:78530"/>
        <dbReference type="ChEBI" id="CHEBI:78844"/>
        <dbReference type="ChEBI" id="CHEBI:195366"/>
        <dbReference type="EC" id="2.1.2.9"/>
    </reaction>
</comment>
<comment type="similarity">
    <text evidence="1">Belongs to the Fmt family.</text>
</comment>
<gene>
    <name evidence="1" type="primary">fmt</name>
    <name type="ordered locus">IL0017</name>
</gene>
<organism>
    <name type="scientific">Idiomarina loihiensis (strain ATCC BAA-735 / DSM 15497 / L2-TR)</name>
    <dbReference type="NCBI Taxonomy" id="283942"/>
    <lineage>
        <taxon>Bacteria</taxon>
        <taxon>Pseudomonadati</taxon>
        <taxon>Pseudomonadota</taxon>
        <taxon>Gammaproteobacteria</taxon>
        <taxon>Alteromonadales</taxon>
        <taxon>Idiomarinaceae</taxon>
        <taxon>Idiomarina</taxon>
    </lineage>
</organism>
<feature type="chain" id="PRO_0000082976" description="Methionyl-tRNA formyltransferase">
    <location>
        <begin position="1"/>
        <end position="316"/>
    </location>
</feature>
<feature type="binding site" evidence="1">
    <location>
        <begin position="109"/>
        <end position="112"/>
    </location>
    <ligand>
        <name>(6S)-5,6,7,8-tetrahydrofolate</name>
        <dbReference type="ChEBI" id="CHEBI:57453"/>
    </ligand>
</feature>
<dbReference type="EC" id="2.1.2.9" evidence="1"/>
<dbReference type="EMBL" id="AE017340">
    <property type="protein sequence ID" value="AAV80861.1"/>
    <property type="molecule type" value="Genomic_DNA"/>
</dbReference>
<dbReference type="RefSeq" id="WP_011233281.1">
    <property type="nucleotide sequence ID" value="NC_006512.1"/>
</dbReference>
<dbReference type="SMR" id="Q5QXI6"/>
<dbReference type="STRING" id="283942.IL0017"/>
<dbReference type="GeneID" id="41335165"/>
<dbReference type="KEGG" id="ilo:IL0017"/>
<dbReference type="eggNOG" id="COG0223">
    <property type="taxonomic scope" value="Bacteria"/>
</dbReference>
<dbReference type="HOGENOM" id="CLU_033347_1_2_6"/>
<dbReference type="OrthoDB" id="9802815at2"/>
<dbReference type="Proteomes" id="UP000001171">
    <property type="component" value="Chromosome"/>
</dbReference>
<dbReference type="GO" id="GO:0005829">
    <property type="term" value="C:cytosol"/>
    <property type="evidence" value="ECO:0007669"/>
    <property type="project" value="TreeGrafter"/>
</dbReference>
<dbReference type="GO" id="GO:0004479">
    <property type="term" value="F:methionyl-tRNA formyltransferase activity"/>
    <property type="evidence" value="ECO:0007669"/>
    <property type="project" value="UniProtKB-UniRule"/>
</dbReference>
<dbReference type="CDD" id="cd08646">
    <property type="entry name" value="FMT_core_Met-tRNA-FMT_N"/>
    <property type="match status" value="1"/>
</dbReference>
<dbReference type="CDD" id="cd08704">
    <property type="entry name" value="Met_tRNA_FMT_C"/>
    <property type="match status" value="1"/>
</dbReference>
<dbReference type="FunFam" id="3.40.50.170:FF:000003">
    <property type="entry name" value="Methionyl-tRNA formyltransferase"/>
    <property type="match status" value="1"/>
</dbReference>
<dbReference type="Gene3D" id="3.10.25.10">
    <property type="entry name" value="Formyl transferase, C-terminal domain"/>
    <property type="match status" value="1"/>
</dbReference>
<dbReference type="Gene3D" id="3.40.50.170">
    <property type="entry name" value="Formyl transferase, N-terminal domain"/>
    <property type="match status" value="1"/>
</dbReference>
<dbReference type="HAMAP" id="MF_00182">
    <property type="entry name" value="Formyl_trans"/>
    <property type="match status" value="1"/>
</dbReference>
<dbReference type="InterPro" id="IPR005794">
    <property type="entry name" value="Fmt"/>
</dbReference>
<dbReference type="InterPro" id="IPR005793">
    <property type="entry name" value="Formyl_trans_C"/>
</dbReference>
<dbReference type="InterPro" id="IPR037022">
    <property type="entry name" value="Formyl_trans_C_sf"/>
</dbReference>
<dbReference type="InterPro" id="IPR002376">
    <property type="entry name" value="Formyl_transf_N"/>
</dbReference>
<dbReference type="InterPro" id="IPR036477">
    <property type="entry name" value="Formyl_transf_N_sf"/>
</dbReference>
<dbReference type="InterPro" id="IPR011034">
    <property type="entry name" value="Formyl_transferase-like_C_sf"/>
</dbReference>
<dbReference type="InterPro" id="IPR001555">
    <property type="entry name" value="GART_AS"/>
</dbReference>
<dbReference type="InterPro" id="IPR044135">
    <property type="entry name" value="Met-tRNA-FMT_C"/>
</dbReference>
<dbReference type="InterPro" id="IPR041711">
    <property type="entry name" value="Met-tRNA-FMT_N"/>
</dbReference>
<dbReference type="NCBIfam" id="TIGR00460">
    <property type="entry name" value="fmt"/>
    <property type="match status" value="1"/>
</dbReference>
<dbReference type="PANTHER" id="PTHR11138">
    <property type="entry name" value="METHIONYL-TRNA FORMYLTRANSFERASE"/>
    <property type="match status" value="1"/>
</dbReference>
<dbReference type="PANTHER" id="PTHR11138:SF5">
    <property type="entry name" value="METHIONYL-TRNA FORMYLTRANSFERASE, MITOCHONDRIAL"/>
    <property type="match status" value="1"/>
</dbReference>
<dbReference type="Pfam" id="PF02911">
    <property type="entry name" value="Formyl_trans_C"/>
    <property type="match status" value="1"/>
</dbReference>
<dbReference type="Pfam" id="PF00551">
    <property type="entry name" value="Formyl_trans_N"/>
    <property type="match status" value="1"/>
</dbReference>
<dbReference type="SUPFAM" id="SSF50486">
    <property type="entry name" value="FMT C-terminal domain-like"/>
    <property type="match status" value="1"/>
</dbReference>
<dbReference type="SUPFAM" id="SSF53328">
    <property type="entry name" value="Formyltransferase"/>
    <property type="match status" value="1"/>
</dbReference>
<dbReference type="PROSITE" id="PS00373">
    <property type="entry name" value="GART"/>
    <property type="match status" value="1"/>
</dbReference>
<reference key="1">
    <citation type="journal article" date="2004" name="Proc. Natl. Acad. Sci. U.S.A.">
        <title>Genome sequence of the deep-sea gamma-proteobacterium Idiomarina loihiensis reveals amino acid fermentation as a source of carbon and energy.</title>
        <authorList>
            <person name="Hou S."/>
            <person name="Saw J.H."/>
            <person name="Lee K.S."/>
            <person name="Freitas T.A."/>
            <person name="Belisle C."/>
            <person name="Kawarabayasi Y."/>
            <person name="Donachie S.P."/>
            <person name="Pikina A."/>
            <person name="Galperin M.Y."/>
            <person name="Koonin E.V."/>
            <person name="Makarova K.S."/>
            <person name="Omelchenko M.V."/>
            <person name="Sorokin A."/>
            <person name="Wolf Y.I."/>
            <person name="Li Q.X."/>
            <person name="Keum Y.S."/>
            <person name="Campbell S."/>
            <person name="Denery J."/>
            <person name="Aizawa S."/>
            <person name="Shibata S."/>
            <person name="Malahoff A."/>
            <person name="Alam M."/>
        </authorList>
    </citation>
    <scope>NUCLEOTIDE SEQUENCE [LARGE SCALE GENOMIC DNA]</scope>
    <source>
        <strain>ATCC BAA-735 / DSM 15497 / L2-TR</strain>
    </source>
</reference>
<sequence length="316" mass="34220">MRIVFAGTPDFAAQHLQQLLDESHQVVGVYTQPDRPAGRGKKPQPSAVKKLALEHQLPVYQPESLKSEEDQAALADLKPDVMVVVAYGLLLPQAVLDIPTKGCLNVHGSLLPRWRGAAPIQRAIWAGDLESGVCIMQMEAGLDTGPVLHEERCAISPDETSASLYHKLESLGPEALTKVLKDLDGYQSQAKPQSDANATYAKKLTKQEGKIDWTQPAAFIERCVRAFNPWPMSWCQSEHLKAGQNTVKIHAAELIQGASNKGPGTIINSTHEGIDVVTGDGILRITQAQMPGKKAQPASTLVNGYSNVFSPGLELQ</sequence>
<proteinExistence type="inferred from homology"/>
<keyword id="KW-0648">Protein biosynthesis</keyword>
<keyword id="KW-1185">Reference proteome</keyword>
<keyword id="KW-0808">Transferase</keyword>
<name>FMT_IDILO</name>